<organism>
    <name type="scientific">Escherichia coli O9:H4 (strain HS)</name>
    <dbReference type="NCBI Taxonomy" id="331112"/>
    <lineage>
        <taxon>Bacteria</taxon>
        <taxon>Pseudomonadati</taxon>
        <taxon>Pseudomonadota</taxon>
        <taxon>Gammaproteobacteria</taxon>
        <taxon>Enterobacterales</taxon>
        <taxon>Enterobacteriaceae</taxon>
        <taxon>Escherichia</taxon>
    </lineage>
</organism>
<dbReference type="EMBL" id="CP000802">
    <property type="protein sequence ID" value="ABV08057.1"/>
    <property type="molecule type" value="Genomic_DNA"/>
</dbReference>
<dbReference type="RefSeq" id="WP_000818601.1">
    <property type="nucleotide sequence ID" value="NC_009800.1"/>
</dbReference>
<dbReference type="SMR" id="A8A6A3"/>
<dbReference type="GeneID" id="93778356"/>
<dbReference type="KEGG" id="ecx:EcHS_A3850"/>
<dbReference type="HOGENOM" id="CLU_069356_5_0_6"/>
<dbReference type="GO" id="GO:0043590">
    <property type="term" value="C:bacterial nucleoid"/>
    <property type="evidence" value="ECO:0007669"/>
    <property type="project" value="UniProtKB-UniRule"/>
</dbReference>
<dbReference type="GO" id="GO:0005737">
    <property type="term" value="C:cytoplasm"/>
    <property type="evidence" value="ECO:0007669"/>
    <property type="project" value="UniProtKB-UniRule"/>
</dbReference>
<dbReference type="GO" id="GO:0003700">
    <property type="term" value="F:DNA-binding transcription factor activity"/>
    <property type="evidence" value="ECO:0007669"/>
    <property type="project" value="TreeGrafter"/>
</dbReference>
<dbReference type="GO" id="GO:0000976">
    <property type="term" value="F:transcription cis-regulatory region binding"/>
    <property type="evidence" value="ECO:0007669"/>
    <property type="project" value="TreeGrafter"/>
</dbReference>
<dbReference type="GO" id="GO:0051301">
    <property type="term" value="P:cell division"/>
    <property type="evidence" value="ECO:0007669"/>
    <property type="project" value="UniProtKB-KW"/>
</dbReference>
<dbReference type="GO" id="GO:0010974">
    <property type="term" value="P:negative regulation of division septum assembly"/>
    <property type="evidence" value="ECO:0007669"/>
    <property type="project" value="InterPro"/>
</dbReference>
<dbReference type="FunFam" id="1.10.357.10:FF:000002">
    <property type="entry name" value="Nucleoid occlusion factor SlmA"/>
    <property type="match status" value="1"/>
</dbReference>
<dbReference type="Gene3D" id="1.10.357.10">
    <property type="entry name" value="Tetracycline Repressor, domain 2"/>
    <property type="match status" value="1"/>
</dbReference>
<dbReference type="HAMAP" id="MF_01839">
    <property type="entry name" value="NO_factor_SlmA"/>
    <property type="match status" value="1"/>
</dbReference>
<dbReference type="InterPro" id="IPR023772">
    <property type="entry name" value="DNA-bd_HTH_TetR-type_CS"/>
</dbReference>
<dbReference type="InterPro" id="IPR009057">
    <property type="entry name" value="Homeodomain-like_sf"/>
</dbReference>
<dbReference type="InterPro" id="IPR050109">
    <property type="entry name" value="HTH-type_TetR-like_transc_reg"/>
</dbReference>
<dbReference type="InterPro" id="IPR001647">
    <property type="entry name" value="HTH_TetR"/>
</dbReference>
<dbReference type="InterPro" id="IPR023769">
    <property type="entry name" value="NO_SlmA"/>
</dbReference>
<dbReference type="InterPro" id="IPR054580">
    <property type="entry name" value="SlmA-like_C"/>
</dbReference>
<dbReference type="InterPro" id="IPR036271">
    <property type="entry name" value="Tet_transcr_reg_TetR-rel_C_sf"/>
</dbReference>
<dbReference type="NCBIfam" id="NF007015">
    <property type="entry name" value="PRK09480.1"/>
    <property type="match status" value="1"/>
</dbReference>
<dbReference type="PANTHER" id="PTHR30055">
    <property type="entry name" value="HTH-TYPE TRANSCRIPTIONAL REGULATOR RUTR"/>
    <property type="match status" value="1"/>
</dbReference>
<dbReference type="PANTHER" id="PTHR30055:SF183">
    <property type="entry name" value="NUCLEOID OCCLUSION FACTOR SLMA"/>
    <property type="match status" value="1"/>
</dbReference>
<dbReference type="Pfam" id="PF22276">
    <property type="entry name" value="SlmA-like_C"/>
    <property type="match status" value="1"/>
</dbReference>
<dbReference type="Pfam" id="PF00440">
    <property type="entry name" value="TetR_N"/>
    <property type="match status" value="1"/>
</dbReference>
<dbReference type="SUPFAM" id="SSF46689">
    <property type="entry name" value="Homeodomain-like"/>
    <property type="match status" value="1"/>
</dbReference>
<dbReference type="SUPFAM" id="SSF48498">
    <property type="entry name" value="Tetracyclin repressor-like, C-terminal domain"/>
    <property type="match status" value="1"/>
</dbReference>
<dbReference type="PROSITE" id="PS01081">
    <property type="entry name" value="HTH_TETR_1"/>
    <property type="match status" value="1"/>
</dbReference>
<dbReference type="PROSITE" id="PS50977">
    <property type="entry name" value="HTH_TETR_2"/>
    <property type="match status" value="1"/>
</dbReference>
<name>SLMA_ECOHS</name>
<reference key="1">
    <citation type="journal article" date="2008" name="J. Bacteriol.">
        <title>The pangenome structure of Escherichia coli: comparative genomic analysis of E. coli commensal and pathogenic isolates.</title>
        <authorList>
            <person name="Rasko D.A."/>
            <person name="Rosovitz M.J."/>
            <person name="Myers G.S.A."/>
            <person name="Mongodin E.F."/>
            <person name="Fricke W.F."/>
            <person name="Gajer P."/>
            <person name="Crabtree J."/>
            <person name="Sebaihia M."/>
            <person name="Thomson N.R."/>
            <person name="Chaudhuri R."/>
            <person name="Henderson I.R."/>
            <person name="Sperandio V."/>
            <person name="Ravel J."/>
        </authorList>
    </citation>
    <scope>NUCLEOTIDE SEQUENCE [LARGE SCALE GENOMIC DNA]</scope>
    <source>
        <strain>HS</strain>
    </source>
</reference>
<sequence length="198" mass="22836">MAEKQTAKRNRREEILQSLALMLESSDGSQRITTAKLAASVGVSEAALYRHFPSKTRMFDSLIEFIEDSLITRINLILKDEKDTTARLRLIVLLLLGFGERNPGLTRILTGHALMFEQDRLQGRINQLFERIEAQLRQVLREKRMREGEGYTTDETLLASQILAFCEGMLSRFVRSEFKYRPTDDFDARWPLIAAQLQ</sequence>
<accession>A8A6A3</accession>
<gene>
    <name evidence="1" type="primary">slmA</name>
    <name type="ordered locus">EcHS_A3850</name>
</gene>
<feature type="chain" id="PRO_1000070515" description="Nucleoid occlusion factor SlmA">
    <location>
        <begin position="1"/>
        <end position="198"/>
    </location>
</feature>
<feature type="domain" description="HTH tetR-type" evidence="1">
    <location>
        <begin position="10"/>
        <end position="70"/>
    </location>
</feature>
<feature type="DNA-binding region" description="H-T-H motif" evidence="1">
    <location>
        <begin position="33"/>
        <end position="52"/>
    </location>
</feature>
<feature type="coiled-coil region" evidence="1">
    <location>
        <begin position="117"/>
        <end position="144"/>
    </location>
</feature>
<comment type="function">
    <text evidence="1">Required for nucleoid occlusion (NO) phenomenon, which prevents Z-ring formation and cell division over the nucleoid. Acts as a DNA-associated cell division inhibitor that binds simultaneously chromosomal DNA and FtsZ, and disrupts the assembly of FtsZ polymers. SlmA-DNA-binding sequences (SBS) are dispersed on non-Ter regions of the chromosome, preventing FtsZ polymerization at these regions.</text>
</comment>
<comment type="subunit">
    <text evidence="1">Homodimer. Interacts with FtsZ.</text>
</comment>
<comment type="subcellular location">
    <subcellularLocation>
        <location evidence="1">Cytoplasm</location>
        <location evidence="1">Nucleoid</location>
    </subcellularLocation>
</comment>
<comment type="similarity">
    <text evidence="1">Belongs to the nucleoid occlusion factor SlmA family.</text>
</comment>
<evidence type="ECO:0000255" key="1">
    <source>
        <dbReference type="HAMAP-Rule" id="MF_01839"/>
    </source>
</evidence>
<protein>
    <recommendedName>
        <fullName evidence="1">Nucleoid occlusion factor SlmA</fullName>
    </recommendedName>
</protein>
<keyword id="KW-0131">Cell cycle</keyword>
<keyword id="KW-0132">Cell division</keyword>
<keyword id="KW-0175">Coiled coil</keyword>
<keyword id="KW-0963">Cytoplasm</keyword>
<keyword id="KW-0238">DNA-binding</keyword>
<proteinExistence type="inferred from homology"/>